<comment type="function">
    <text evidence="1">Catalyzes the reversible transfer of the terminal phosphate of ATP to form a long-chain polyphosphate (polyP).</text>
</comment>
<comment type="catalytic activity">
    <reaction evidence="1">
        <text>[phosphate](n) + ATP = [phosphate](n+1) + ADP</text>
        <dbReference type="Rhea" id="RHEA:19573"/>
        <dbReference type="Rhea" id="RHEA-COMP:9859"/>
        <dbReference type="Rhea" id="RHEA-COMP:14280"/>
        <dbReference type="ChEBI" id="CHEBI:16838"/>
        <dbReference type="ChEBI" id="CHEBI:30616"/>
        <dbReference type="ChEBI" id="CHEBI:456216"/>
        <dbReference type="EC" id="2.7.4.1"/>
    </reaction>
</comment>
<comment type="cofactor">
    <cofactor evidence="1">
        <name>Mg(2+)</name>
        <dbReference type="ChEBI" id="CHEBI:18420"/>
    </cofactor>
</comment>
<comment type="PTM">
    <text evidence="1">An intermediate of this reaction is the autophosphorylated ppk in which a phosphate is covalently linked to a histidine residue through a N-P bond.</text>
</comment>
<comment type="similarity">
    <text evidence="1">Belongs to the polyphosphate kinase 1 (PPK1) family.</text>
</comment>
<organism>
    <name type="scientific">Mycobacterium bovis (strain BCG / Tokyo 172 / ATCC 35737 / TMC 1019)</name>
    <dbReference type="NCBI Taxonomy" id="561275"/>
    <lineage>
        <taxon>Bacteria</taxon>
        <taxon>Bacillati</taxon>
        <taxon>Actinomycetota</taxon>
        <taxon>Actinomycetes</taxon>
        <taxon>Mycobacteriales</taxon>
        <taxon>Mycobacteriaceae</taxon>
        <taxon>Mycobacterium</taxon>
        <taxon>Mycobacterium tuberculosis complex</taxon>
    </lineage>
</organism>
<gene>
    <name evidence="1" type="primary">ppk</name>
    <name type="ordered locus">JTY_3000</name>
</gene>
<reference key="1">
    <citation type="journal article" date="2009" name="Vaccine">
        <title>Whole genome sequence analysis of Mycobacterium bovis bacillus Calmette-Guerin (BCG) Tokyo 172: a comparative study of BCG vaccine substrains.</title>
        <authorList>
            <person name="Seki M."/>
            <person name="Honda I."/>
            <person name="Fujita I."/>
            <person name="Yano I."/>
            <person name="Yamamoto S."/>
            <person name="Koyama A."/>
        </authorList>
    </citation>
    <scope>NUCLEOTIDE SEQUENCE [LARGE SCALE GENOMIC DNA]</scope>
    <source>
        <strain>BCG / Tokyo 172 / ATCC 35737 / TMC 1019</strain>
    </source>
</reference>
<dbReference type="EC" id="2.7.4.1" evidence="1"/>
<dbReference type="EMBL" id="AP010918">
    <property type="protein sequence ID" value="BAH27278.1"/>
    <property type="molecule type" value="Genomic_DNA"/>
</dbReference>
<dbReference type="RefSeq" id="WP_003415097.1">
    <property type="nucleotide sequence ID" value="NZ_CP014566.1"/>
</dbReference>
<dbReference type="SMR" id="C1AG99"/>
<dbReference type="KEGG" id="mbt:JTY_3000"/>
<dbReference type="HOGENOM" id="CLU_009678_5_0_11"/>
<dbReference type="GO" id="GO:0009358">
    <property type="term" value="C:polyphosphate kinase complex"/>
    <property type="evidence" value="ECO:0007669"/>
    <property type="project" value="InterPro"/>
</dbReference>
<dbReference type="GO" id="GO:0005524">
    <property type="term" value="F:ATP binding"/>
    <property type="evidence" value="ECO:0007669"/>
    <property type="project" value="UniProtKB-KW"/>
</dbReference>
<dbReference type="GO" id="GO:0046872">
    <property type="term" value="F:metal ion binding"/>
    <property type="evidence" value="ECO:0007669"/>
    <property type="project" value="UniProtKB-KW"/>
</dbReference>
<dbReference type="GO" id="GO:0008976">
    <property type="term" value="F:polyphosphate kinase activity"/>
    <property type="evidence" value="ECO:0007669"/>
    <property type="project" value="UniProtKB-UniRule"/>
</dbReference>
<dbReference type="GO" id="GO:0006799">
    <property type="term" value="P:polyphosphate biosynthetic process"/>
    <property type="evidence" value="ECO:0007669"/>
    <property type="project" value="UniProtKB-UniRule"/>
</dbReference>
<dbReference type="CDD" id="cd09165">
    <property type="entry name" value="PLDc_PaPPK1_C1_like"/>
    <property type="match status" value="1"/>
</dbReference>
<dbReference type="FunFam" id="1.20.58.310:FF:000002">
    <property type="entry name" value="Polyphosphate kinase"/>
    <property type="match status" value="1"/>
</dbReference>
<dbReference type="FunFam" id="3.30.1840.10:FF:000002">
    <property type="entry name" value="Polyphosphate kinase"/>
    <property type="match status" value="1"/>
</dbReference>
<dbReference type="FunFam" id="3.30.870.10:FF:000001">
    <property type="entry name" value="Polyphosphate kinase"/>
    <property type="match status" value="1"/>
</dbReference>
<dbReference type="Gene3D" id="3.30.870.10">
    <property type="entry name" value="Endonuclease Chain A"/>
    <property type="match status" value="2"/>
</dbReference>
<dbReference type="Gene3D" id="3.30.1840.10">
    <property type="entry name" value="Polyphosphate kinase middle domain"/>
    <property type="match status" value="1"/>
</dbReference>
<dbReference type="Gene3D" id="1.20.58.310">
    <property type="entry name" value="Polyphosphate kinase N-terminal domain"/>
    <property type="match status" value="1"/>
</dbReference>
<dbReference type="HAMAP" id="MF_00347">
    <property type="entry name" value="Polyphosphate_kinase"/>
    <property type="match status" value="1"/>
</dbReference>
<dbReference type="InterPro" id="IPR003414">
    <property type="entry name" value="PP_kinase"/>
</dbReference>
<dbReference type="InterPro" id="IPR041108">
    <property type="entry name" value="PP_kinase_C_1"/>
</dbReference>
<dbReference type="InterPro" id="IPR024953">
    <property type="entry name" value="PP_kinase_middle"/>
</dbReference>
<dbReference type="InterPro" id="IPR036830">
    <property type="entry name" value="PP_kinase_middle_dom_sf"/>
</dbReference>
<dbReference type="InterPro" id="IPR025200">
    <property type="entry name" value="PPK_C_dom2"/>
</dbReference>
<dbReference type="InterPro" id="IPR025198">
    <property type="entry name" value="PPK_N_dom"/>
</dbReference>
<dbReference type="InterPro" id="IPR036832">
    <property type="entry name" value="PPK_N_dom_sf"/>
</dbReference>
<dbReference type="NCBIfam" id="TIGR03705">
    <property type="entry name" value="poly_P_kin"/>
    <property type="match status" value="1"/>
</dbReference>
<dbReference type="NCBIfam" id="NF003917">
    <property type="entry name" value="PRK05443.1-1"/>
    <property type="match status" value="1"/>
</dbReference>
<dbReference type="NCBIfam" id="NF003918">
    <property type="entry name" value="PRK05443.1-2"/>
    <property type="match status" value="1"/>
</dbReference>
<dbReference type="NCBIfam" id="NF003921">
    <property type="entry name" value="PRK05443.2-2"/>
    <property type="match status" value="1"/>
</dbReference>
<dbReference type="NCBIfam" id="NF003922">
    <property type="entry name" value="PRK05443.2-3"/>
    <property type="match status" value="1"/>
</dbReference>
<dbReference type="PANTHER" id="PTHR30218">
    <property type="entry name" value="POLYPHOSPHATE KINASE"/>
    <property type="match status" value="1"/>
</dbReference>
<dbReference type="PANTHER" id="PTHR30218:SF0">
    <property type="entry name" value="POLYPHOSPHATE KINASE"/>
    <property type="match status" value="1"/>
</dbReference>
<dbReference type="Pfam" id="PF02503">
    <property type="entry name" value="PP_kinase"/>
    <property type="match status" value="1"/>
</dbReference>
<dbReference type="Pfam" id="PF13090">
    <property type="entry name" value="PP_kinase_C"/>
    <property type="match status" value="1"/>
</dbReference>
<dbReference type="Pfam" id="PF17941">
    <property type="entry name" value="PP_kinase_C_1"/>
    <property type="match status" value="1"/>
</dbReference>
<dbReference type="Pfam" id="PF13089">
    <property type="entry name" value="PP_kinase_N"/>
    <property type="match status" value="1"/>
</dbReference>
<dbReference type="PIRSF" id="PIRSF015589">
    <property type="entry name" value="PP_kinase"/>
    <property type="match status" value="1"/>
</dbReference>
<dbReference type="SUPFAM" id="SSF56024">
    <property type="entry name" value="Phospholipase D/nuclease"/>
    <property type="match status" value="2"/>
</dbReference>
<dbReference type="SUPFAM" id="SSF143724">
    <property type="entry name" value="PHP14-like"/>
    <property type="match status" value="1"/>
</dbReference>
<dbReference type="SUPFAM" id="SSF140356">
    <property type="entry name" value="PPK N-terminal domain-like"/>
    <property type="match status" value="1"/>
</dbReference>
<protein>
    <recommendedName>
        <fullName evidence="1">Polyphosphate kinase</fullName>
        <ecNumber evidence="1">2.7.4.1</ecNumber>
    </recommendedName>
    <alternativeName>
        <fullName evidence="1">ATP-polyphosphate phosphotransferase</fullName>
    </alternativeName>
    <alternativeName>
        <fullName evidence="1">Polyphosphoric acid kinase</fullName>
    </alternativeName>
</protein>
<feature type="chain" id="PRO_1000133404" description="Polyphosphate kinase">
    <location>
        <begin position="1"/>
        <end position="742"/>
    </location>
</feature>
<feature type="region of interest" description="Disordered" evidence="2">
    <location>
        <begin position="718"/>
        <end position="742"/>
    </location>
</feature>
<feature type="compositionally biased region" description="Basic and acidic residues" evidence="2">
    <location>
        <begin position="726"/>
        <end position="742"/>
    </location>
</feature>
<feature type="active site" description="Phosphohistidine intermediate" evidence="1">
    <location>
        <position position="491"/>
    </location>
</feature>
<feature type="binding site" evidence="1">
    <location>
        <position position="91"/>
    </location>
    <ligand>
        <name>ATP</name>
        <dbReference type="ChEBI" id="CHEBI:30616"/>
    </ligand>
</feature>
<feature type="binding site" evidence="1">
    <location>
        <position position="431"/>
    </location>
    <ligand>
        <name>Mg(2+)</name>
        <dbReference type="ChEBI" id="CHEBI:18420"/>
    </ligand>
</feature>
<feature type="binding site" evidence="1">
    <location>
        <position position="461"/>
    </location>
    <ligand>
        <name>Mg(2+)</name>
        <dbReference type="ChEBI" id="CHEBI:18420"/>
    </ligand>
</feature>
<feature type="binding site" evidence="1">
    <location>
        <position position="524"/>
    </location>
    <ligand>
        <name>ATP</name>
        <dbReference type="ChEBI" id="CHEBI:30616"/>
    </ligand>
</feature>
<feature type="binding site" evidence="1">
    <location>
        <position position="624"/>
    </location>
    <ligand>
        <name>ATP</name>
        <dbReference type="ChEBI" id="CHEBI:30616"/>
    </ligand>
</feature>
<feature type="binding site" evidence="1">
    <location>
        <position position="652"/>
    </location>
    <ligand>
        <name>ATP</name>
        <dbReference type="ChEBI" id="CHEBI:30616"/>
    </ligand>
</feature>
<sequence>MMSNDRKVTEIENSPVTEVRPEEHAWYPDDSALAAPPAATPAAISDQLPSDRYLNRELSWLDFNARVLALAADKSMPLLERAKFLAIFASNLDEFYMVRVAGLKRRDEMGLSVRSADGLTPREQLGRIGEQTQQLASRHARVFLDSVLPALGEEGIYIVTWADLDQAERDRLSTYFNEQVFPVLTPLAVDPAHPFPFVSGLSLNLAVTVRQPEDGTQHFARVKVPDNVDRFVELAAREASEEAAGTEGRTALRFLPMEELIAAFLPVLFPGMEIVEHHAFRITRNADFEVEEDRDEDLLQALERELARRRFGSPVRLEIADDMTESMLELLLRELDVHPGDVIEVPGLLDLSSLWQIYAVDRPTLKDRTFVPATHPAFAERETPKSIFATLREGDVLVHHPYDSFSTSVQRFIEQAAADPNVLAIKQTLYRTSGDSPIVRALIDAAEAGKQVVALVEIKARFDEQANIAWARALEQAGVHVAYGLVGLKTHCKTALVVRREGPTIRRYCHVGTGNYNSKTARLYEDVGLLTAAPDIGADLTDLFNSLTGYSRKLSYRNLLVAPHGIRAGIIDRVEREVAAHRAEGAHNGKGRIRLKMNALVDEQVIDALYRASRAGVRIEVVVRGICALRPGAQGISENIIVRSILGRFLEHSRILHFRAIDEFWIGSADMMHRNLDRRVEVMAQVKNPRLTAQLDELFESALDPCTRCWELGPDGQWTASPQEGHSVRDHQESLMERHRSP</sequence>
<keyword id="KW-0067">ATP-binding</keyword>
<keyword id="KW-0418">Kinase</keyword>
<keyword id="KW-0460">Magnesium</keyword>
<keyword id="KW-0479">Metal-binding</keyword>
<keyword id="KW-0547">Nucleotide-binding</keyword>
<keyword id="KW-0597">Phosphoprotein</keyword>
<keyword id="KW-0808">Transferase</keyword>
<accession>C1AG99</accession>
<proteinExistence type="inferred from homology"/>
<evidence type="ECO:0000255" key="1">
    <source>
        <dbReference type="HAMAP-Rule" id="MF_00347"/>
    </source>
</evidence>
<evidence type="ECO:0000256" key="2">
    <source>
        <dbReference type="SAM" id="MobiDB-lite"/>
    </source>
</evidence>
<name>PPK1_MYCBT</name>